<protein>
    <recommendedName>
        <fullName evidence="1">tRNA uridine 5-carboxymethylaminomethyl modification enzyme MnmG</fullName>
    </recommendedName>
    <alternativeName>
        <fullName evidence="1">Glucose-inhibited division protein A</fullName>
    </alternativeName>
</protein>
<dbReference type="EMBL" id="CP000789">
    <property type="protein sequence ID" value="ABU69448.1"/>
    <property type="molecule type" value="Genomic_DNA"/>
</dbReference>
<dbReference type="RefSeq" id="WP_012126661.1">
    <property type="nucleotide sequence ID" value="NC_009783.1"/>
</dbReference>
<dbReference type="SMR" id="A7N0X6"/>
<dbReference type="KEGG" id="vha:VIBHAR_00433"/>
<dbReference type="PATRIC" id="fig|338187.25.peg.2157"/>
<dbReference type="Proteomes" id="UP000008152">
    <property type="component" value="Chromosome I"/>
</dbReference>
<dbReference type="GO" id="GO:0005829">
    <property type="term" value="C:cytosol"/>
    <property type="evidence" value="ECO:0007669"/>
    <property type="project" value="TreeGrafter"/>
</dbReference>
<dbReference type="GO" id="GO:0050660">
    <property type="term" value="F:flavin adenine dinucleotide binding"/>
    <property type="evidence" value="ECO:0007669"/>
    <property type="project" value="UniProtKB-UniRule"/>
</dbReference>
<dbReference type="GO" id="GO:0030488">
    <property type="term" value="P:tRNA methylation"/>
    <property type="evidence" value="ECO:0007669"/>
    <property type="project" value="TreeGrafter"/>
</dbReference>
<dbReference type="GO" id="GO:0002098">
    <property type="term" value="P:tRNA wobble uridine modification"/>
    <property type="evidence" value="ECO:0007669"/>
    <property type="project" value="InterPro"/>
</dbReference>
<dbReference type="FunFam" id="1.10.10.1800:FF:000001">
    <property type="entry name" value="tRNA uridine 5-carboxymethylaminomethyl modification enzyme MnmG"/>
    <property type="match status" value="1"/>
</dbReference>
<dbReference type="FunFam" id="1.10.150.570:FF:000001">
    <property type="entry name" value="tRNA uridine 5-carboxymethylaminomethyl modification enzyme MnmG"/>
    <property type="match status" value="1"/>
</dbReference>
<dbReference type="FunFam" id="3.50.50.60:FF:000002">
    <property type="entry name" value="tRNA uridine 5-carboxymethylaminomethyl modification enzyme MnmG"/>
    <property type="match status" value="1"/>
</dbReference>
<dbReference type="FunFam" id="3.50.50.60:FF:000010">
    <property type="entry name" value="tRNA uridine 5-carboxymethylaminomethyl modification enzyme MnmG"/>
    <property type="match status" value="1"/>
</dbReference>
<dbReference type="Gene3D" id="3.50.50.60">
    <property type="entry name" value="FAD/NAD(P)-binding domain"/>
    <property type="match status" value="2"/>
</dbReference>
<dbReference type="Gene3D" id="1.10.150.570">
    <property type="entry name" value="GidA associated domain, C-terminal subdomain"/>
    <property type="match status" value="1"/>
</dbReference>
<dbReference type="Gene3D" id="1.10.10.1800">
    <property type="entry name" value="tRNA uridine 5-carboxymethylaminomethyl modification enzyme MnmG/GidA"/>
    <property type="match status" value="1"/>
</dbReference>
<dbReference type="HAMAP" id="MF_00129">
    <property type="entry name" value="MnmG_GidA"/>
    <property type="match status" value="1"/>
</dbReference>
<dbReference type="InterPro" id="IPR036188">
    <property type="entry name" value="FAD/NAD-bd_sf"/>
</dbReference>
<dbReference type="InterPro" id="IPR049312">
    <property type="entry name" value="GIDA_C_N"/>
</dbReference>
<dbReference type="InterPro" id="IPR004416">
    <property type="entry name" value="MnmG"/>
</dbReference>
<dbReference type="InterPro" id="IPR002218">
    <property type="entry name" value="MnmG-rel"/>
</dbReference>
<dbReference type="InterPro" id="IPR020595">
    <property type="entry name" value="MnmG-rel_CS"/>
</dbReference>
<dbReference type="InterPro" id="IPR026904">
    <property type="entry name" value="MnmG_C"/>
</dbReference>
<dbReference type="InterPro" id="IPR047001">
    <property type="entry name" value="MnmG_C_subdom"/>
</dbReference>
<dbReference type="InterPro" id="IPR044920">
    <property type="entry name" value="MnmG_C_subdom_sf"/>
</dbReference>
<dbReference type="InterPro" id="IPR040131">
    <property type="entry name" value="MnmG_N"/>
</dbReference>
<dbReference type="NCBIfam" id="TIGR00136">
    <property type="entry name" value="mnmG_gidA"/>
    <property type="match status" value="1"/>
</dbReference>
<dbReference type="PANTHER" id="PTHR11806">
    <property type="entry name" value="GLUCOSE INHIBITED DIVISION PROTEIN A"/>
    <property type="match status" value="1"/>
</dbReference>
<dbReference type="PANTHER" id="PTHR11806:SF0">
    <property type="entry name" value="PROTEIN MTO1 HOMOLOG, MITOCHONDRIAL"/>
    <property type="match status" value="1"/>
</dbReference>
<dbReference type="Pfam" id="PF01134">
    <property type="entry name" value="GIDA"/>
    <property type="match status" value="1"/>
</dbReference>
<dbReference type="Pfam" id="PF21680">
    <property type="entry name" value="GIDA_C_1st"/>
    <property type="match status" value="1"/>
</dbReference>
<dbReference type="Pfam" id="PF13932">
    <property type="entry name" value="SAM_GIDA_C"/>
    <property type="match status" value="1"/>
</dbReference>
<dbReference type="SMART" id="SM01228">
    <property type="entry name" value="GIDA_assoc_3"/>
    <property type="match status" value="1"/>
</dbReference>
<dbReference type="SUPFAM" id="SSF51905">
    <property type="entry name" value="FAD/NAD(P)-binding domain"/>
    <property type="match status" value="1"/>
</dbReference>
<dbReference type="PROSITE" id="PS01280">
    <property type="entry name" value="GIDA_1"/>
    <property type="match status" value="1"/>
</dbReference>
<dbReference type="PROSITE" id="PS01281">
    <property type="entry name" value="GIDA_2"/>
    <property type="match status" value="1"/>
</dbReference>
<comment type="function">
    <text evidence="1">NAD-binding protein involved in the addition of a carboxymethylaminomethyl (cmnm) group at the wobble position (U34) of certain tRNAs, forming tRNA-cmnm(5)s(2)U34.</text>
</comment>
<comment type="cofactor">
    <cofactor evidence="1">
        <name>FAD</name>
        <dbReference type="ChEBI" id="CHEBI:57692"/>
    </cofactor>
</comment>
<comment type="subunit">
    <text evidence="1">Homodimer. Heterotetramer of two MnmE and two MnmG subunits.</text>
</comment>
<comment type="subcellular location">
    <subcellularLocation>
        <location evidence="1">Cytoplasm</location>
    </subcellularLocation>
</comment>
<comment type="similarity">
    <text evidence="1">Belongs to the MnmG family.</text>
</comment>
<gene>
    <name evidence="1" type="primary">mnmG</name>
    <name evidence="1" type="synonym">gidA</name>
    <name type="ordered locus">VIBHAR_00433</name>
</gene>
<accession>A7N0X6</accession>
<feature type="chain" id="PRO_1000016707" description="tRNA uridine 5-carboxymethylaminomethyl modification enzyme MnmG">
    <location>
        <begin position="1"/>
        <end position="631"/>
    </location>
</feature>
<feature type="binding site" evidence="1">
    <location>
        <begin position="13"/>
        <end position="18"/>
    </location>
    <ligand>
        <name>FAD</name>
        <dbReference type="ChEBI" id="CHEBI:57692"/>
    </ligand>
</feature>
<feature type="binding site" evidence="1">
    <location>
        <position position="125"/>
    </location>
    <ligand>
        <name>FAD</name>
        <dbReference type="ChEBI" id="CHEBI:57692"/>
    </ligand>
</feature>
<feature type="binding site" evidence="1">
    <location>
        <position position="180"/>
    </location>
    <ligand>
        <name>FAD</name>
        <dbReference type="ChEBI" id="CHEBI:57692"/>
    </ligand>
</feature>
<feature type="binding site" evidence="1">
    <location>
        <begin position="273"/>
        <end position="287"/>
    </location>
    <ligand>
        <name>NAD(+)</name>
        <dbReference type="ChEBI" id="CHEBI:57540"/>
    </ligand>
</feature>
<feature type="binding site" evidence="1">
    <location>
        <position position="370"/>
    </location>
    <ligand>
        <name>FAD</name>
        <dbReference type="ChEBI" id="CHEBI:57692"/>
    </ligand>
</feature>
<name>MNMG_VIBC1</name>
<evidence type="ECO:0000255" key="1">
    <source>
        <dbReference type="HAMAP-Rule" id="MF_00129"/>
    </source>
</evidence>
<proteinExistence type="inferred from homology"/>
<organism>
    <name type="scientific">Vibrio campbellii (strain ATCC BAA-1116)</name>
    <dbReference type="NCBI Taxonomy" id="2902295"/>
    <lineage>
        <taxon>Bacteria</taxon>
        <taxon>Pseudomonadati</taxon>
        <taxon>Pseudomonadota</taxon>
        <taxon>Gammaproteobacteria</taxon>
        <taxon>Vibrionales</taxon>
        <taxon>Vibrionaceae</taxon>
        <taxon>Vibrio</taxon>
    </lineage>
</organism>
<reference key="1">
    <citation type="submission" date="2007-08" db="EMBL/GenBank/DDBJ databases">
        <authorList>
            <consortium name="The Vibrio harveyi Genome Sequencing Project"/>
            <person name="Bassler B."/>
            <person name="Clifton S.W."/>
            <person name="Fulton L."/>
            <person name="Delehaunty K."/>
            <person name="Fronick C."/>
            <person name="Harrison M."/>
            <person name="Markivic C."/>
            <person name="Fulton R."/>
            <person name="Tin-Wollam A.-M."/>
            <person name="Shah N."/>
            <person name="Pepin K."/>
            <person name="Nash W."/>
            <person name="Thiruvilangam P."/>
            <person name="Bhonagiri V."/>
            <person name="Waters C."/>
            <person name="Tu K.C."/>
            <person name="Irgon J."/>
            <person name="Wilson R.K."/>
        </authorList>
    </citation>
    <scope>NUCLEOTIDE SEQUENCE [LARGE SCALE GENOMIC DNA]</scope>
    <source>
        <strain>ATCC BAA-1116 / BB120</strain>
    </source>
</reference>
<sequence length="631" mass="69994">MLYHENFDVIVVGGGHAGTEAALASARTGQKTLLLTHNIDTLGQMSCNPAIGGIGKGHLVKEVDAMGGLMAEAIDHAGIQFRTLNASKGPAVRATRAQADRALYKAYVRNALENAPNLTLFQQSVDDLIVDQDRVVGVVTQMGLKFQAKAVVLTVGTFLGGKIHIGMESSSGGRAGDPPSIALADRLRELPFRVDRLKTGTPPRIDARSVDFSVLEAQHGDNPTPVFSFMGKREHQPRQIPCFITHTNEKTHDVIRNNLDRSPMYAGVIEGIGPRYCPSIEDKVMRFADKNSHQIFIEPEGLTTHELYPNGISTSLPFDVQVQIVRSMKGFENAHIVRPGYAIEYDFFDPRDLKQTYETKFISGLFFAGQINGTTGYEEAAAQGLMAGLNASLHSQGKEGWSPRRDQAYMGVLIDDLSTMGTKEPYRMFTSRAEYRLLLREDNADLRLTEKARELGLIDDARWARFNEKIENMETERQRLKSTWMNPNSAGIDELNKLLKTPMAREASGEDLLRRPEISYSDLTQLDAFAPALEDQQASEQVEIQVKYDGYIKRQQEEIEKSLRHEHTKLPADLDYKDVKGLSNEVVAKLTEAKPESIGIASRISGITPAAISILLVHLKKHGLLKKGEEE</sequence>
<keyword id="KW-0963">Cytoplasm</keyword>
<keyword id="KW-0274">FAD</keyword>
<keyword id="KW-0285">Flavoprotein</keyword>
<keyword id="KW-0520">NAD</keyword>
<keyword id="KW-0819">tRNA processing</keyword>